<sequence>MAPSVTIDNISDFSPITTTTKTTSFNLRTLLLAPPSIASHEEKLRNVLATHDRSVTDLQMLDRLSAGLVTLPESTYDLVLILTDADGTRAESTELLTRDVFGKITQALKTGAKLQAQDGTFGQEIDGAEYREAILAGLVTEGGVMLKPDHSASVAVPLRLRRKDNSKTTAVSNAGPPVSTVEVPVSGKRKSVDMTEDVPEKDVPKNDVPKGVGFIDFSDDFDAEDDDDELIDEDTLLTEEDMKKPLAIPPECAPRAGKRRRACKDCTCGLAEKLAKEDAEKRATADSQLQALKLDADDLAEVDFTVKGKVGSCGNCSLGDAFRCDGCPYIGMPAFKPGEEVRLLNNDVQL</sequence>
<protein>
    <recommendedName>
        <fullName evidence="1">Fe-S cluster assembly protein dre2</fullName>
    </recommendedName>
    <alternativeName>
        <fullName evidence="1">Anamorsin homolog</fullName>
    </alternativeName>
</protein>
<dbReference type="EMBL" id="CH476636">
    <property type="protein sequence ID" value="EDN94686.1"/>
    <property type="molecule type" value="Genomic_DNA"/>
</dbReference>
<dbReference type="RefSeq" id="XP_001588114.1">
    <property type="nucleotide sequence ID" value="XM_001588064.1"/>
</dbReference>
<dbReference type="FunCoup" id="A7EYZ4">
    <property type="interactions" value="165"/>
</dbReference>
<dbReference type="STRING" id="665079.A7EYZ4"/>
<dbReference type="GeneID" id="5484265"/>
<dbReference type="KEGG" id="ssl:SS1G_10560"/>
<dbReference type="VEuPathDB" id="FungiDB:sscle_09g071700"/>
<dbReference type="InParanoid" id="A7EYZ4"/>
<dbReference type="OMA" id="DFVMPVT"/>
<dbReference type="OrthoDB" id="311633at2759"/>
<dbReference type="Proteomes" id="UP000001312">
    <property type="component" value="Unassembled WGS sequence"/>
</dbReference>
<dbReference type="GO" id="GO:0005737">
    <property type="term" value="C:cytoplasm"/>
    <property type="evidence" value="ECO:0000318"/>
    <property type="project" value="GO_Central"/>
</dbReference>
<dbReference type="GO" id="GO:0005758">
    <property type="term" value="C:mitochondrial intermembrane space"/>
    <property type="evidence" value="ECO:0007669"/>
    <property type="project" value="UniProtKB-SubCell"/>
</dbReference>
<dbReference type="GO" id="GO:0051537">
    <property type="term" value="F:2 iron, 2 sulfur cluster binding"/>
    <property type="evidence" value="ECO:0007669"/>
    <property type="project" value="UniProtKB-UniRule"/>
</dbReference>
<dbReference type="GO" id="GO:0051539">
    <property type="term" value="F:4 iron, 4 sulfur cluster binding"/>
    <property type="evidence" value="ECO:0007669"/>
    <property type="project" value="UniProtKB-KW"/>
</dbReference>
<dbReference type="GO" id="GO:0009055">
    <property type="term" value="F:electron transfer activity"/>
    <property type="evidence" value="ECO:0007669"/>
    <property type="project" value="UniProtKB-UniRule"/>
</dbReference>
<dbReference type="GO" id="GO:0046872">
    <property type="term" value="F:metal ion binding"/>
    <property type="evidence" value="ECO:0007669"/>
    <property type="project" value="UniProtKB-KW"/>
</dbReference>
<dbReference type="GO" id="GO:0016226">
    <property type="term" value="P:iron-sulfur cluster assembly"/>
    <property type="evidence" value="ECO:0000318"/>
    <property type="project" value="GO_Central"/>
</dbReference>
<dbReference type="FunFam" id="3.40.50.11000:FF:000002">
    <property type="entry name" value="Fe-S cluster assembly protein DRE2"/>
    <property type="match status" value="1"/>
</dbReference>
<dbReference type="Gene3D" id="3.40.50.11000">
    <property type="entry name" value="Fe-S cluster assembly protein Dre2, N-terminal domain"/>
    <property type="match status" value="1"/>
</dbReference>
<dbReference type="HAMAP" id="MF_03115">
    <property type="entry name" value="Anamorsin"/>
    <property type="match status" value="1"/>
</dbReference>
<dbReference type="InterPro" id="IPR007785">
    <property type="entry name" value="Anamorsin"/>
</dbReference>
<dbReference type="InterPro" id="IPR046408">
    <property type="entry name" value="CIAPIN1"/>
</dbReference>
<dbReference type="InterPro" id="IPR031838">
    <property type="entry name" value="Dre2_N"/>
</dbReference>
<dbReference type="PANTHER" id="PTHR13273">
    <property type="entry name" value="ANAMORSIN"/>
    <property type="match status" value="1"/>
</dbReference>
<dbReference type="PANTHER" id="PTHR13273:SF14">
    <property type="entry name" value="ANAMORSIN"/>
    <property type="match status" value="1"/>
</dbReference>
<dbReference type="Pfam" id="PF05093">
    <property type="entry name" value="CIAPIN1"/>
    <property type="match status" value="1"/>
</dbReference>
<dbReference type="Pfam" id="PF16803">
    <property type="entry name" value="DRE2_N"/>
    <property type="match status" value="1"/>
</dbReference>
<reference key="1">
    <citation type="journal article" date="2011" name="PLoS Genet.">
        <title>Genomic analysis of the necrotrophic fungal pathogens Sclerotinia sclerotiorum and Botrytis cinerea.</title>
        <authorList>
            <person name="Amselem J."/>
            <person name="Cuomo C.A."/>
            <person name="van Kan J.A.L."/>
            <person name="Viaud M."/>
            <person name="Benito E.P."/>
            <person name="Couloux A."/>
            <person name="Coutinho P.M."/>
            <person name="de Vries R.P."/>
            <person name="Dyer P.S."/>
            <person name="Fillinger S."/>
            <person name="Fournier E."/>
            <person name="Gout L."/>
            <person name="Hahn M."/>
            <person name="Kohn L."/>
            <person name="Lapalu N."/>
            <person name="Plummer K.M."/>
            <person name="Pradier J.-M."/>
            <person name="Quevillon E."/>
            <person name="Sharon A."/>
            <person name="Simon A."/>
            <person name="ten Have A."/>
            <person name="Tudzynski B."/>
            <person name="Tudzynski P."/>
            <person name="Wincker P."/>
            <person name="Andrew M."/>
            <person name="Anthouard V."/>
            <person name="Beever R.E."/>
            <person name="Beffa R."/>
            <person name="Benoit I."/>
            <person name="Bouzid O."/>
            <person name="Brault B."/>
            <person name="Chen Z."/>
            <person name="Choquer M."/>
            <person name="Collemare J."/>
            <person name="Cotton P."/>
            <person name="Danchin E.G."/>
            <person name="Da Silva C."/>
            <person name="Gautier A."/>
            <person name="Giraud C."/>
            <person name="Giraud T."/>
            <person name="Gonzalez C."/>
            <person name="Grossetete S."/>
            <person name="Gueldener U."/>
            <person name="Henrissat B."/>
            <person name="Howlett B.J."/>
            <person name="Kodira C."/>
            <person name="Kretschmer M."/>
            <person name="Lappartient A."/>
            <person name="Leroch M."/>
            <person name="Levis C."/>
            <person name="Mauceli E."/>
            <person name="Neuveglise C."/>
            <person name="Oeser B."/>
            <person name="Pearson M."/>
            <person name="Poulain J."/>
            <person name="Poussereau N."/>
            <person name="Quesneville H."/>
            <person name="Rascle C."/>
            <person name="Schumacher J."/>
            <person name="Segurens B."/>
            <person name="Sexton A."/>
            <person name="Silva E."/>
            <person name="Sirven C."/>
            <person name="Soanes D.M."/>
            <person name="Talbot N.J."/>
            <person name="Templeton M."/>
            <person name="Yandava C."/>
            <person name="Yarden O."/>
            <person name="Zeng Q."/>
            <person name="Rollins J.A."/>
            <person name="Lebrun M.-H."/>
            <person name="Dickman M."/>
        </authorList>
    </citation>
    <scope>NUCLEOTIDE SEQUENCE [LARGE SCALE GENOMIC DNA]</scope>
    <source>
        <strain>ATCC 18683 / 1980 / Ss-1</strain>
    </source>
</reference>
<keyword id="KW-0001">2Fe-2S</keyword>
<keyword id="KW-0004">4Fe-4S</keyword>
<keyword id="KW-0963">Cytoplasm</keyword>
<keyword id="KW-0408">Iron</keyword>
<keyword id="KW-0411">Iron-sulfur</keyword>
<keyword id="KW-0479">Metal-binding</keyword>
<keyword id="KW-0496">Mitochondrion</keyword>
<keyword id="KW-1185">Reference proteome</keyword>
<name>DRE2_SCLS1</name>
<proteinExistence type="inferred from homology"/>
<gene>
    <name evidence="1" type="primary">dre2</name>
    <name type="ORF">SS1G_10560</name>
</gene>
<comment type="function">
    <text evidence="1">Component of the cytosolic iron-sulfur (Fe-S) protein assembly (CIA) machinery required for the maturation of extramitochondrial Fe-S proteins. Part of an electron transfer chain functioning in an early step of cytosolic Fe-S biogenesis, facilitating the de novo assembly of a [4Fe-4S] cluster on the scaffold complex CFD1-NBP35. Electrons are transferred to DRE2 from NADPH via the FAD- and FMN-containing protein TAH18. TAH18-DRE2 are also required for the assembly of the diferric tyrosyl radical cofactor of ribonucleotide reductase (RNR), probably by providing electrons for reduction during radical cofactor maturation in the catalytic small subunit RNR2.</text>
</comment>
<comment type="cofactor">
    <cofactor evidence="1">
        <name>[2Fe-2S] cluster</name>
        <dbReference type="ChEBI" id="CHEBI:190135"/>
    </cofactor>
</comment>
<comment type="cofactor">
    <cofactor evidence="1">
        <name>[4Fe-4S] cluster</name>
        <dbReference type="ChEBI" id="CHEBI:49883"/>
    </cofactor>
</comment>
<comment type="subunit">
    <text evidence="1">Monomer. Interacts with TAH18. Interacts with MIA40.</text>
</comment>
<comment type="subcellular location">
    <subcellularLocation>
        <location evidence="1">Cytoplasm</location>
    </subcellularLocation>
    <subcellularLocation>
        <location evidence="1">Mitochondrion intermembrane space</location>
    </subcellularLocation>
</comment>
<comment type="domain">
    <text evidence="1">The C-terminal domain binds 2 Fe-S clusters but is otherwise mostly in an intrinsically disordered conformation.</text>
</comment>
<comment type="domain">
    <text evidence="1">The N-terminal domain has structural similarity with S-adenosyl-L-methionine-dependent methyltransferases, but does not bind S-adenosyl-L-methionine. It is required for correct assembly of the 2 Fe-S clusters.</text>
</comment>
<comment type="domain">
    <text evidence="1">The twin Cx2C motifs are involved in the recognition by the mitochondrial MIA40-ERV1 disulfide relay system. The formation of 2 disulfide bonds in the Cx2C motifs through dithiol/disulfide exchange reactions effectively traps the protein in the mitochondrial intermembrane space.</text>
</comment>
<comment type="similarity">
    <text evidence="1">Belongs to the anamorsin family.</text>
</comment>
<feature type="chain" id="PRO_0000324872" description="Fe-S cluster assembly protein dre2">
    <location>
        <begin position="1"/>
        <end position="350"/>
    </location>
</feature>
<feature type="region of interest" description="N-terminal SAM-like domain" evidence="1">
    <location>
        <begin position="23"/>
        <end position="156"/>
    </location>
</feature>
<feature type="region of interest" description="Linker" evidence="1">
    <location>
        <begin position="157"/>
        <end position="242"/>
    </location>
</feature>
<feature type="region of interest" description="Disordered" evidence="2">
    <location>
        <begin position="165"/>
        <end position="209"/>
    </location>
</feature>
<feature type="region of interest" description="Fe-S binding site A" evidence="1">
    <location>
        <begin position="252"/>
        <end position="268"/>
    </location>
</feature>
<feature type="region of interest" description="Fe-S binding site B" evidence="1">
    <location>
        <begin position="313"/>
        <end position="327"/>
    </location>
</feature>
<feature type="short sequence motif" description="Cx2C motif 1" evidence="1">
    <location>
        <begin position="313"/>
        <end position="316"/>
    </location>
</feature>
<feature type="short sequence motif" description="Cx2C motif 2" evidence="1">
    <location>
        <begin position="324"/>
        <end position="327"/>
    </location>
</feature>
<feature type="compositionally biased region" description="Basic and acidic residues" evidence="2">
    <location>
        <begin position="190"/>
        <end position="208"/>
    </location>
</feature>
<feature type="binding site" evidence="1">
    <location>
        <position position="252"/>
    </location>
    <ligand>
        <name>[2Fe-2S] cluster</name>
        <dbReference type="ChEBI" id="CHEBI:190135"/>
    </ligand>
</feature>
<feature type="binding site" evidence="1">
    <location>
        <position position="263"/>
    </location>
    <ligand>
        <name>[2Fe-2S] cluster</name>
        <dbReference type="ChEBI" id="CHEBI:190135"/>
    </ligand>
</feature>
<feature type="binding site" evidence="1">
    <location>
        <position position="266"/>
    </location>
    <ligand>
        <name>[2Fe-2S] cluster</name>
        <dbReference type="ChEBI" id="CHEBI:190135"/>
    </ligand>
</feature>
<feature type="binding site" evidence="1">
    <location>
        <position position="268"/>
    </location>
    <ligand>
        <name>[2Fe-2S] cluster</name>
        <dbReference type="ChEBI" id="CHEBI:190135"/>
    </ligand>
</feature>
<feature type="binding site" evidence="1">
    <location>
        <position position="313"/>
    </location>
    <ligand>
        <name>[4Fe-4S] cluster</name>
        <dbReference type="ChEBI" id="CHEBI:49883"/>
    </ligand>
</feature>
<feature type="binding site" evidence="1">
    <location>
        <position position="316"/>
    </location>
    <ligand>
        <name>[4Fe-4S] cluster</name>
        <dbReference type="ChEBI" id="CHEBI:49883"/>
    </ligand>
</feature>
<feature type="binding site" evidence="1">
    <location>
        <position position="324"/>
    </location>
    <ligand>
        <name>[4Fe-4S] cluster</name>
        <dbReference type="ChEBI" id="CHEBI:49883"/>
    </ligand>
</feature>
<feature type="binding site" evidence="1">
    <location>
        <position position="327"/>
    </location>
    <ligand>
        <name>[4Fe-4S] cluster</name>
        <dbReference type="ChEBI" id="CHEBI:49883"/>
    </ligand>
</feature>
<evidence type="ECO:0000255" key="1">
    <source>
        <dbReference type="HAMAP-Rule" id="MF_03115"/>
    </source>
</evidence>
<evidence type="ECO:0000256" key="2">
    <source>
        <dbReference type="SAM" id="MobiDB-lite"/>
    </source>
</evidence>
<accession>A7EYZ4</accession>
<organism>
    <name type="scientific">Sclerotinia sclerotiorum (strain ATCC 18683 / 1980 / Ss-1)</name>
    <name type="common">White mold</name>
    <name type="synonym">Whetzelinia sclerotiorum</name>
    <dbReference type="NCBI Taxonomy" id="665079"/>
    <lineage>
        <taxon>Eukaryota</taxon>
        <taxon>Fungi</taxon>
        <taxon>Dikarya</taxon>
        <taxon>Ascomycota</taxon>
        <taxon>Pezizomycotina</taxon>
        <taxon>Leotiomycetes</taxon>
        <taxon>Helotiales</taxon>
        <taxon>Sclerotiniaceae</taxon>
        <taxon>Sclerotinia</taxon>
    </lineage>
</organism>